<comment type="function">
    <text evidence="1">Key enzyme in the regulation of glycerol uptake and metabolism. Catalyzes the phosphorylation of glycerol to yield sn-glycerol 3-phosphate.</text>
</comment>
<comment type="catalytic activity">
    <reaction evidence="1">
        <text>glycerol + ATP = sn-glycerol 3-phosphate + ADP + H(+)</text>
        <dbReference type="Rhea" id="RHEA:21644"/>
        <dbReference type="ChEBI" id="CHEBI:15378"/>
        <dbReference type="ChEBI" id="CHEBI:17754"/>
        <dbReference type="ChEBI" id="CHEBI:30616"/>
        <dbReference type="ChEBI" id="CHEBI:57597"/>
        <dbReference type="ChEBI" id="CHEBI:456216"/>
        <dbReference type="EC" id="2.7.1.30"/>
    </reaction>
</comment>
<comment type="activity regulation">
    <text evidence="1">Inhibited by fructose 1,6-bisphosphate (FBP).</text>
</comment>
<comment type="pathway">
    <text evidence="1">Polyol metabolism; glycerol degradation via glycerol kinase pathway; sn-glycerol 3-phosphate from glycerol: step 1/1.</text>
</comment>
<comment type="similarity">
    <text evidence="1">Belongs to the FGGY kinase family.</text>
</comment>
<proteinExistence type="inferred from homology"/>
<protein>
    <recommendedName>
        <fullName evidence="1">Glycerol kinase</fullName>
        <ecNumber evidence="1">2.7.1.30</ecNumber>
    </recommendedName>
    <alternativeName>
        <fullName evidence="1">ATP:glycerol 3-phosphotransferase</fullName>
    </alternativeName>
    <alternativeName>
        <fullName evidence="1">Glycerokinase</fullName>
        <shortName evidence="1">GK</shortName>
    </alternativeName>
</protein>
<keyword id="KW-0067">ATP-binding</keyword>
<keyword id="KW-0319">Glycerol metabolism</keyword>
<keyword id="KW-0418">Kinase</keyword>
<keyword id="KW-0547">Nucleotide-binding</keyword>
<keyword id="KW-1185">Reference proteome</keyword>
<keyword id="KW-0808">Transferase</keyword>
<name>GLPK_NITV2</name>
<feature type="chain" id="PRO_1000020727" description="Glycerol kinase">
    <location>
        <begin position="1"/>
        <end position="497"/>
    </location>
</feature>
<feature type="binding site" evidence="1">
    <location>
        <position position="12"/>
    </location>
    <ligand>
        <name>ADP</name>
        <dbReference type="ChEBI" id="CHEBI:456216"/>
    </ligand>
</feature>
<feature type="binding site" evidence="1">
    <location>
        <position position="12"/>
    </location>
    <ligand>
        <name>ATP</name>
        <dbReference type="ChEBI" id="CHEBI:30616"/>
    </ligand>
</feature>
<feature type="binding site" evidence="1">
    <location>
        <position position="12"/>
    </location>
    <ligand>
        <name>sn-glycerol 3-phosphate</name>
        <dbReference type="ChEBI" id="CHEBI:57597"/>
    </ligand>
</feature>
<feature type="binding site" evidence="1">
    <location>
        <position position="13"/>
    </location>
    <ligand>
        <name>ATP</name>
        <dbReference type="ChEBI" id="CHEBI:30616"/>
    </ligand>
</feature>
<feature type="binding site" evidence="1">
    <location>
        <position position="14"/>
    </location>
    <ligand>
        <name>ATP</name>
        <dbReference type="ChEBI" id="CHEBI:30616"/>
    </ligand>
</feature>
<feature type="binding site" evidence="1">
    <location>
        <position position="16"/>
    </location>
    <ligand>
        <name>ADP</name>
        <dbReference type="ChEBI" id="CHEBI:456216"/>
    </ligand>
</feature>
<feature type="binding site" evidence="1">
    <location>
        <position position="82"/>
    </location>
    <ligand>
        <name>glycerol</name>
        <dbReference type="ChEBI" id="CHEBI:17754"/>
    </ligand>
</feature>
<feature type="binding site" evidence="1">
    <location>
        <position position="82"/>
    </location>
    <ligand>
        <name>sn-glycerol 3-phosphate</name>
        <dbReference type="ChEBI" id="CHEBI:57597"/>
    </ligand>
</feature>
<feature type="binding site" evidence="1">
    <location>
        <position position="83"/>
    </location>
    <ligand>
        <name>glycerol</name>
        <dbReference type="ChEBI" id="CHEBI:17754"/>
    </ligand>
</feature>
<feature type="binding site" evidence="1">
    <location>
        <position position="83"/>
    </location>
    <ligand>
        <name>sn-glycerol 3-phosphate</name>
        <dbReference type="ChEBI" id="CHEBI:57597"/>
    </ligand>
</feature>
<feature type="binding site" evidence="1">
    <location>
        <position position="134"/>
    </location>
    <ligand>
        <name>glycerol</name>
        <dbReference type="ChEBI" id="CHEBI:17754"/>
    </ligand>
</feature>
<feature type="binding site" evidence="1">
    <location>
        <position position="134"/>
    </location>
    <ligand>
        <name>sn-glycerol 3-phosphate</name>
        <dbReference type="ChEBI" id="CHEBI:57597"/>
    </ligand>
</feature>
<feature type="binding site" evidence="1">
    <location>
        <position position="243"/>
    </location>
    <ligand>
        <name>glycerol</name>
        <dbReference type="ChEBI" id="CHEBI:17754"/>
    </ligand>
</feature>
<feature type="binding site" evidence="1">
    <location>
        <position position="243"/>
    </location>
    <ligand>
        <name>sn-glycerol 3-phosphate</name>
        <dbReference type="ChEBI" id="CHEBI:57597"/>
    </ligand>
</feature>
<feature type="binding site" evidence="1">
    <location>
        <position position="244"/>
    </location>
    <ligand>
        <name>glycerol</name>
        <dbReference type="ChEBI" id="CHEBI:17754"/>
    </ligand>
</feature>
<feature type="binding site" evidence="1">
    <location>
        <position position="265"/>
    </location>
    <ligand>
        <name>ADP</name>
        <dbReference type="ChEBI" id="CHEBI:456216"/>
    </ligand>
</feature>
<feature type="binding site" evidence="1">
    <location>
        <position position="265"/>
    </location>
    <ligand>
        <name>ATP</name>
        <dbReference type="ChEBI" id="CHEBI:30616"/>
    </ligand>
</feature>
<feature type="binding site" evidence="1">
    <location>
        <position position="308"/>
    </location>
    <ligand>
        <name>ADP</name>
        <dbReference type="ChEBI" id="CHEBI:456216"/>
    </ligand>
</feature>
<feature type="binding site" evidence="1">
    <location>
        <position position="308"/>
    </location>
    <ligand>
        <name>ATP</name>
        <dbReference type="ChEBI" id="CHEBI:30616"/>
    </ligand>
</feature>
<feature type="binding site" evidence="1">
    <location>
        <position position="312"/>
    </location>
    <ligand>
        <name>ATP</name>
        <dbReference type="ChEBI" id="CHEBI:30616"/>
    </ligand>
</feature>
<feature type="binding site" evidence="1">
    <location>
        <position position="409"/>
    </location>
    <ligand>
        <name>ADP</name>
        <dbReference type="ChEBI" id="CHEBI:456216"/>
    </ligand>
</feature>
<feature type="binding site" evidence="1">
    <location>
        <position position="409"/>
    </location>
    <ligand>
        <name>ATP</name>
        <dbReference type="ChEBI" id="CHEBI:30616"/>
    </ligand>
</feature>
<feature type="binding site" evidence="1">
    <location>
        <position position="413"/>
    </location>
    <ligand>
        <name>ADP</name>
        <dbReference type="ChEBI" id="CHEBI:456216"/>
    </ligand>
</feature>
<sequence>MSNYVLALDQGTTSSRAILFTREGDIKQISQKEFTQIYPQPGWVEHNANEIFDTQSWVMRECLQEAGIGAADVVAAGITNQRETTVVWDKATGAPVYNAIVWQDRRTAGFCDELKARGLADVFRKKTGLVLDAYFSGTKVRWILDNVPGARAKAEKGELLFGTIDTWLIWNLTKGKAHVTDSSNASRTLMFNINTGAWDDELLGILDVPRSMLPRVTGSSEVVGDIHPEFLGKAIPIAGNAGDQQAATYGNACLKPGMAKNTYGTGCFMLMNTGTEVRSSQNNLLSTVAWTTPSGRFYALEGSVFIAGAVVQWLRDGLGIIKAAPEVEQLALSVPDNGGVYLVPAFAGLGAPHWDQYARGTMVGITRGATKAHIARAALESIALQTLDIMDCMQKDSGIKLAALRADGGATRNNLLMQFQADVLGVPVERPKVTETTALGAAYLAGLATGFWKSEDEIATMWQLDRRFEPNMSDDKRQHLVYEWQRAVERAKAWVEA</sequence>
<organism>
    <name type="scientific">Nitratidesulfovibrio vulgaris (strain ATCC 29579 / DSM 644 / CCUG 34227 / NCIMB 8303 / VKM B-1760 / Hildenborough)</name>
    <name type="common">Desulfovibrio vulgaris</name>
    <dbReference type="NCBI Taxonomy" id="882"/>
    <lineage>
        <taxon>Bacteria</taxon>
        <taxon>Pseudomonadati</taxon>
        <taxon>Thermodesulfobacteriota</taxon>
        <taxon>Desulfovibrionia</taxon>
        <taxon>Desulfovibrionales</taxon>
        <taxon>Desulfovibrionaceae</taxon>
        <taxon>Nitratidesulfovibrio</taxon>
    </lineage>
</organism>
<accession>Q726H4</accession>
<gene>
    <name evidence="1" type="primary">glpK</name>
    <name type="ordered locus">DVU_3134</name>
</gene>
<evidence type="ECO:0000255" key="1">
    <source>
        <dbReference type="HAMAP-Rule" id="MF_00186"/>
    </source>
</evidence>
<reference key="1">
    <citation type="journal article" date="2004" name="Nat. Biotechnol.">
        <title>The genome sequence of the anaerobic, sulfate-reducing bacterium Desulfovibrio vulgaris Hildenborough.</title>
        <authorList>
            <person name="Heidelberg J.F."/>
            <person name="Seshadri R."/>
            <person name="Haveman S.A."/>
            <person name="Hemme C.L."/>
            <person name="Paulsen I.T."/>
            <person name="Kolonay J.F."/>
            <person name="Eisen J.A."/>
            <person name="Ward N.L."/>
            <person name="Methe B.A."/>
            <person name="Brinkac L.M."/>
            <person name="Daugherty S.C."/>
            <person name="DeBoy R.T."/>
            <person name="Dodson R.J."/>
            <person name="Durkin A.S."/>
            <person name="Madupu R."/>
            <person name="Nelson W.C."/>
            <person name="Sullivan S.A."/>
            <person name="Fouts D.E."/>
            <person name="Haft D.H."/>
            <person name="Selengut J."/>
            <person name="Peterson J.D."/>
            <person name="Davidsen T.M."/>
            <person name="Zafar N."/>
            <person name="Zhou L."/>
            <person name="Radune D."/>
            <person name="Dimitrov G."/>
            <person name="Hance M."/>
            <person name="Tran K."/>
            <person name="Khouri H.M."/>
            <person name="Gill J."/>
            <person name="Utterback T.R."/>
            <person name="Feldblyum T.V."/>
            <person name="Wall J.D."/>
            <person name="Voordouw G."/>
            <person name="Fraser C.M."/>
        </authorList>
    </citation>
    <scope>NUCLEOTIDE SEQUENCE [LARGE SCALE GENOMIC DNA]</scope>
    <source>
        <strain>ATCC 29579 / DSM 644 / CCUG 34227 / NCIMB 8303 / VKM B-1760 / Hildenborough</strain>
    </source>
</reference>
<dbReference type="EC" id="2.7.1.30" evidence="1"/>
<dbReference type="EMBL" id="AE017285">
    <property type="protein sequence ID" value="AAS97604.1"/>
    <property type="molecule type" value="Genomic_DNA"/>
</dbReference>
<dbReference type="RefSeq" id="WP_010940392.1">
    <property type="nucleotide sequence ID" value="NC_002937.3"/>
</dbReference>
<dbReference type="RefSeq" id="YP_012344.1">
    <property type="nucleotide sequence ID" value="NC_002937.3"/>
</dbReference>
<dbReference type="SMR" id="Q726H4"/>
<dbReference type="IntAct" id="Q726H4">
    <property type="interactions" value="2"/>
</dbReference>
<dbReference type="STRING" id="882.DVU_3134"/>
<dbReference type="PaxDb" id="882-DVU_3134"/>
<dbReference type="EnsemblBacteria" id="AAS97604">
    <property type="protein sequence ID" value="AAS97604"/>
    <property type="gene ID" value="DVU_3134"/>
</dbReference>
<dbReference type="KEGG" id="dvu:DVU_3134"/>
<dbReference type="PATRIC" id="fig|882.5.peg.2841"/>
<dbReference type="eggNOG" id="COG0554">
    <property type="taxonomic scope" value="Bacteria"/>
</dbReference>
<dbReference type="HOGENOM" id="CLU_009281_2_3_7"/>
<dbReference type="OrthoDB" id="9805576at2"/>
<dbReference type="PhylomeDB" id="Q726H4"/>
<dbReference type="UniPathway" id="UPA00618">
    <property type="reaction ID" value="UER00672"/>
</dbReference>
<dbReference type="Proteomes" id="UP000002194">
    <property type="component" value="Chromosome"/>
</dbReference>
<dbReference type="GO" id="GO:0005829">
    <property type="term" value="C:cytosol"/>
    <property type="evidence" value="ECO:0007669"/>
    <property type="project" value="TreeGrafter"/>
</dbReference>
<dbReference type="GO" id="GO:0005524">
    <property type="term" value="F:ATP binding"/>
    <property type="evidence" value="ECO:0007669"/>
    <property type="project" value="UniProtKB-UniRule"/>
</dbReference>
<dbReference type="GO" id="GO:0004370">
    <property type="term" value="F:glycerol kinase activity"/>
    <property type="evidence" value="ECO:0000250"/>
    <property type="project" value="UniProtKB"/>
</dbReference>
<dbReference type="GO" id="GO:0019563">
    <property type="term" value="P:glycerol catabolic process"/>
    <property type="evidence" value="ECO:0007669"/>
    <property type="project" value="UniProtKB-UniRule"/>
</dbReference>
<dbReference type="GO" id="GO:0006071">
    <property type="term" value="P:glycerol metabolic process"/>
    <property type="evidence" value="ECO:0000250"/>
    <property type="project" value="UniProtKB"/>
</dbReference>
<dbReference type="GO" id="GO:0006072">
    <property type="term" value="P:glycerol-3-phosphate metabolic process"/>
    <property type="evidence" value="ECO:0007669"/>
    <property type="project" value="InterPro"/>
</dbReference>
<dbReference type="CDD" id="cd07786">
    <property type="entry name" value="FGGY_EcGK_like"/>
    <property type="match status" value="1"/>
</dbReference>
<dbReference type="FunFam" id="3.30.420.40:FF:000007">
    <property type="entry name" value="Glycerol kinase"/>
    <property type="match status" value="1"/>
</dbReference>
<dbReference type="FunFam" id="3.30.420.40:FF:000008">
    <property type="entry name" value="Glycerol kinase"/>
    <property type="match status" value="1"/>
</dbReference>
<dbReference type="Gene3D" id="3.30.420.40">
    <property type="match status" value="2"/>
</dbReference>
<dbReference type="HAMAP" id="MF_00186">
    <property type="entry name" value="Glycerol_kin"/>
    <property type="match status" value="1"/>
</dbReference>
<dbReference type="InterPro" id="IPR043129">
    <property type="entry name" value="ATPase_NBD"/>
</dbReference>
<dbReference type="InterPro" id="IPR000577">
    <property type="entry name" value="Carb_kinase_FGGY"/>
</dbReference>
<dbReference type="InterPro" id="IPR018483">
    <property type="entry name" value="Carb_kinase_FGGY_CS"/>
</dbReference>
<dbReference type="InterPro" id="IPR018485">
    <property type="entry name" value="FGGY_C"/>
</dbReference>
<dbReference type="InterPro" id="IPR018484">
    <property type="entry name" value="FGGY_N"/>
</dbReference>
<dbReference type="InterPro" id="IPR005999">
    <property type="entry name" value="Glycerol_kin"/>
</dbReference>
<dbReference type="NCBIfam" id="TIGR01311">
    <property type="entry name" value="glycerol_kin"/>
    <property type="match status" value="1"/>
</dbReference>
<dbReference type="NCBIfam" id="NF000756">
    <property type="entry name" value="PRK00047.1"/>
    <property type="match status" value="1"/>
</dbReference>
<dbReference type="PANTHER" id="PTHR10196:SF69">
    <property type="entry name" value="GLYCEROL KINASE"/>
    <property type="match status" value="1"/>
</dbReference>
<dbReference type="PANTHER" id="PTHR10196">
    <property type="entry name" value="SUGAR KINASE"/>
    <property type="match status" value="1"/>
</dbReference>
<dbReference type="Pfam" id="PF02782">
    <property type="entry name" value="FGGY_C"/>
    <property type="match status" value="1"/>
</dbReference>
<dbReference type="Pfam" id="PF00370">
    <property type="entry name" value="FGGY_N"/>
    <property type="match status" value="1"/>
</dbReference>
<dbReference type="PIRSF" id="PIRSF000538">
    <property type="entry name" value="GlpK"/>
    <property type="match status" value="1"/>
</dbReference>
<dbReference type="SUPFAM" id="SSF53067">
    <property type="entry name" value="Actin-like ATPase domain"/>
    <property type="match status" value="2"/>
</dbReference>
<dbReference type="PROSITE" id="PS00933">
    <property type="entry name" value="FGGY_KINASES_1"/>
    <property type="match status" value="1"/>
</dbReference>
<dbReference type="PROSITE" id="PS00445">
    <property type="entry name" value="FGGY_KINASES_2"/>
    <property type="match status" value="1"/>
</dbReference>